<accession>Q0HSP5</accession>
<evidence type="ECO:0000255" key="1">
    <source>
        <dbReference type="HAMAP-Rule" id="MF_01845"/>
    </source>
</evidence>
<sequence length="424" mass="44333">MKPQWQQYIQIINQVVKPALGCTEPIAAAYAAAVARTLLPVEPESIAVQVSDNLYKNSMGVYVPGTGKIGLAIAAAAGALAGDAEAGLEVLANVTPEQVTKAQTLIDAGKVKVERTETDEFIYCCVSLTAGEQEAMVKICGGHTLIAEKRLNGELVFTADNAQAKATGSICDGIDINIESIYRFAQEVPFEEIQFILKASELNSKLSDEGMSKPYGLEVGRTMKNGIAAGIIGEDLLNKIVMLTAAASDARMGGANLPAMSNLGSGNQGIAATIPVVITAQCYKVSEEKLARALIMSHLGAIYIKSHYPPLSAFCGNTVTSAAASMAMVYLAGGSFEQSCYAIQNVISDSSGMVCDGAKASCAMKVSTSSSAAVRSFLMALSSQNVSGQGIIAKDVEKTIKNIGKMVLNGMSSTDVTIINIMSE</sequence>
<proteinExistence type="inferred from homology"/>
<comment type="similarity">
    <text evidence="1">Belongs to the UPF0597 family.</text>
</comment>
<organism>
    <name type="scientific">Shewanella sp. (strain MR-7)</name>
    <dbReference type="NCBI Taxonomy" id="60481"/>
    <lineage>
        <taxon>Bacteria</taxon>
        <taxon>Pseudomonadati</taxon>
        <taxon>Pseudomonadota</taxon>
        <taxon>Gammaproteobacteria</taxon>
        <taxon>Alteromonadales</taxon>
        <taxon>Shewanellaceae</taxon>
        <taxon>Shewanella</taxon>
    </lineage>
</organism>
<reference key="1">
    <citation type="submission" date="2006-08" db="EMBL/GenBank/DDBJ databases">
        <title>Complete sequence of chromosome 1 of Shewanella sp. MR-7.</title>
        <authorList>
            <person name="Copeland A."/>
            <person name="Lucas S."/>
            <person name="Lapidus A."/>
            <person name="Barry K."/>
            <person name="Detter J.C."/>
            <person name="Glavina del Rio T."/>
            <person name="Hammon N."/>
            <person name="Israni S."/>
            <person name="Dalin E."/>
            <person name="Tice H."/>
            <person name="Pitluck S."/>
            <person name="Kiss H."/>
            <person name="Brettin T."/>
            <person name="Bruce D."/>
            <person name="Han C."/>
            <person name="Tapia R."/>
            <person name="Gilna P."/>
            <person name="Schmutz J."/>
            <person name="Larimer F."/>
            <person name="Land M."/>
            <person name="Hauser L."/>
            <person name="Kyrpides N."/>
            <person name="Mikhailova N."/>
            <person name="Nealson K."/>
            <person name="Konstantinidis K."/>
            <person name="Klappenbach J."/>
            <person name="Tiedje J."/>
            <person name="Richardson P."/>
        </authorList>
    </citation>
    <scope>NUCLEOTIDE SEQUENCE [LARGE SCALE GENOMIC DNA]</scope>
    <source>
        <strain>MR-7</strain>
    </source>
</reference>
<protein>
    <recommendedName>
        <fullName evidence="1">UPF0597 protein Shewmr7_2876</fullName>
    </recommendedName>
</protein>
<gene>
    <name type="ordered locus">Shewmr7_2876</name>
</gene>
<dbReference type="EMBL" id="CP000444">
    <property type="protein sequence ID" value="ABI43860.1"/>
    <property type="molecule type" value="Genomic_DNA"/>
</dbReference>
<dbReference type="SMR" id="Q0HSP5"/>
<dbReference type="KEGG" id="shm:Shewmr7_2876"/>
<dbReference type="HOGENOM" id="CLU_051840_0_0_6"/>
<dbReference type="GO" id="GO:0080146">
    <property type="term" value="F:L-cysteine desulfhydrase activity"/>
    <property type="evidence" value="ECO:0007669"/>
    <property type="project" value="TreeGrafter"/>
</dbReference>
<dbReference type="GO" id="GO:0019450">
    <property type="term" value="P:L-cysteine catabolic process to pyruvate"/>
    <property type="evidence" value="ECO:0007669"/>
    <property type="project" value="TreeGrafter"/>
</dbReference>
<dbReference type="HAMAP" id="MF_01845">
    <property type="entry name" value="UPF0597"/>
    <property type="match status" value="1"/>
</dbReference>
<dbReference type="InterPro" id="IPR005130">
    <property type="entry name" value="Ser_deHydtase-like_asu"/>
</dbReference>
<dbReference type="InterPro" id="IPR021144">
    <property type="entry name" value="UPF0597"/>
</dbReference>
<dbReference type="PANTHER" id="PTHR30501">
    <property type="entry name" value="UPF0597 PROTEIN YHAM"/>
    <property type="match status" value="1"/>
</dbReference>
<dbReference type="PANTHER" id="PTHR30501:SF2">
    <property type="entry name" value="UPF0597 PROTEIN YHAM"/>
    <property type="match status" value="1"/>
</dbReference>
<dbReference type="Pfam" id="PF03313">
    <property type="entry name" value="SDH_alpha"/>
    <property type="match status" value="1"/>
</dbReference>
<dbReference type="PIRSF" id="PIRSF006054">
    <property type="entry name" value="UCP006054"/>
    <property type="match status" value="1"/>
</dbReference>
<name>Y2876_SHESR</name>
<feature type="chain" id="PRO_0000339854" description="UPF0597 protein Shewmr7_2876">
    <location>
        <begin position="1"/>
        <end position="424"/>
    </location>
</feature>